<keyword id="KW-1003">Cell membrane</keyword>
<keyword id="KW-0472">Membrane</keyword>
<keyword id="KW-0614">Plasmid</keyword>
<keyword id="KW-0812">Transmembrane</keyword>
<keyword id="KW-1133">Transmembrane helix</keyword>
<keyword id="KW-0843">Virulence</keyword>
<comment type="function">
    <text evidence="1">Required for surface presentation of invasion plasmid antigens. Could play a role in preserving the translocation competence of the ipa antigens. Required for invasion and for secretion of the three ipa proteins (By similarity).</text>
</comment>
<comment type="subcellular location">
    <subcellularLocation>
        <location evidence="3">Cell membrane</location>
        <topology evidence="3">Multi-pass membrane protein</topology>
    </subcellularLocation>
</comment>
<comment type="similarity">
    <text evidence="3">Belongs to the FliR/MopE/SpaR family.</text>
</comment>
<name>SPAR_SHISO</name>
<dbReference type="EMBL" id="D50601">
    <property type="protein sequence ID" value="BAA09164.1"/>
    <property type="molecule type" value="Genomic_DNA"/>
</dbReference>
<dbReference type="RefSeq" id="WP_000355395.1">
    <property type="nucleotide sequence ID" value="NZ_UIQD01000016.1"/>
</dbReference>
<dbReference type="SMR" id="P0A1M7"/>
<dbReference type="STRING" id="216599.GCA_000283715_05246"/>
<dbReference type="OMA" id="LYSRFCP"/>
<dbReference type="GO" id="GO:0005886">
    <property type="term" value="C:plasma membrane"/>
    <property type="evidence" value="ECO:0007669"/>
    <property type="project" value="UniProtKB-SubCell"/>
</dbReference>
<dbReference type="GO" id="GO:0006605">
    <property type="term" value="P:protein targeting"/>
    <property type="evidence" value="ECO:0007669"/>
    <property type="project" value="InterPro"/>
</dbReference>
<dbReference type="InterPro" id="IPR002010">
    <property type="entry name" value="T3SS_IM_R"/>
</dbReference>
<dbReference type="InterPro" id="IPR006304">
    <property type="entry name" value="T3SS_SpaR/YscT"/>
</dbReference>
<dbReference type="NCBIfam" id="TIGR01401">
    <property type="entry name" value="fliR_like_III"/>
    <property type="match status" value="1"/>
</dbReference>
<dbReference type="PANTHER" id="PTHR30065">
    <property type="entry name" value="FLAGELLAR BIOSYNTHETIC PROTEIN FLIR"/>
    <property type="match status" value="1"/>
</dbReference>
<dbReference type="PANTHER" id="PTHR30065:SF1">
    <property type="entry name" value="SURFACE PRESENTATION OF ANTIGENS PROTEIN SPAR"/>
    <property type="match status" value="1"/>
</dbReference>
<dbReference type="Pfam" id="PF01311">
    <property type="entry name" value="Bac_export_1"/>
    <property type="match status" value="1"/>
</dbReference>
<dbReference type="PRINTS" id="PR00953">
    <property type="entry name" value="TYPE3IMRPROT"/>
</dbReference>
<organism>
    <name type="scientific">Shigella sonnei</name>
    <dbReference type="NCBI Taxonomy" id="624"/>
    <lineage>
        <taxon>Bacteria</taxon>
        <taxon>Pseudomonadati</taxon>
        <taxon>Pseudomonadota</taxon>
        <taxon>Gammaproteobacteria</taxon>
        <taxon>Enterobacterales</taxon>
        <taxon>Enterobacteriaceae</taxon>
        <taxon>Shigella</taxon>
    </lineage>
</organism>
<geneLocation type="plasmid">
    <name>pINV</name>
</geneLocation>
<evidence type="ECO:0000250" key="1"/>
<evidence type="ECO:0000255" key="2"/>
<evidence type="ECO:0000305" key="3"/>
<gene>
    <name type="primary">spaR</name>
    <name type="synonym">spa29</name>
</gene>
<proteinExistence type="inferred from homology"/>
<sequence length="256" mass="28484">MDISSWFESIHVFLILLNGVFFRLAPLFFFLPFLNNGIISPSIRIPVIFLVASGLITSGKVDIGSSVFEHVYFLMFKEIIVGLLLSFCLSLPFWIFHAVGSIIDNQRGATLSSSIDPANGVDTSELAKFFNLFSAVVFLYSGGMVFILESIQLSYNICPLFSQCSFRVSNILTFLTLLASQAVILASPVMIVLLLSEVLLGVLSRFAPQMNAFSVSLTIKSLLAIFIIFICSSTIYFSKVQFFLGEHKFFTNLFVR</sequence>
<protein>
    <recommendedName>
        <fullName>Surface presentation of antigens protein SpaR</fullName>
    </recommendedName>
    <alternativeName>
        <fullName>Spa29 protein</fullName>
    </alternativeName>
</protein>
<reference key="1">
    <citation type="submission" date="1995-05" db="EMBL/GenBank/DDBJ databases">
        <title>Comparison and high conservation of nucleotide sequences of spa-mxi regions between S.sonnei and S.flexneri -- identification of a new gene coding plausible membrane protein.</title>
        <authorList>
            <person name="Arakawa E."/>
            <person name="Kato J."/>
            <person name="Ito K."/>
            <person name="Watanabe H."/>
        </authorList>
    </citation>
    <scope>NUCLEOTIDE SEQUENCE [GENOMIC DNA]</scope>
    <source>
        <strain>HW383</strain>
    </source>
</reference>
<feature type="chain" id="PRO_0000192061" description="Surface presentation of antigens protein SpaR">
    <location>
        <begin position="1"/>
        <end position="256"/>
    </location>
</feature>
<feature type="transmembrane region" description="Helical" evidence="2">
    <location>
        <begin position="13"/>
        <end position="33"/>
    </location>
</feature>
<feature type="transmembrane region" description="Helical" evidence="2">
    <location>
        <begin position="37"/>
        <end position="57"/>
    </location>
</feature>
<feature type="transmembrane region" description="Helical" evidence="2">
    <location>
        <begin position="79"/>
        <end position="99"/>
    </location>
</feature>
<feature type="transmembrane region" description="Helical" evidence="2">
    <location>
        <begin position="129"/>
        <end position="149"/>
    </location>
</feature>
<feature type="transmembrane region" description="Helical" evidence="2">
    <location>
        <begin position="183"/>
        <end position="203"/>
    </location>
</feature>
<feature type="transmembrane region" description="Helical" evidence="2">
    <location>
        <begin position="217"/>
        <end position="237"/>
    </location>
</feature>
<accession>P0A1M7</accession>
<accession>P40706</accession>
<accession>Q8VSG7</accession>
<accession>Q9AFR9</accession>
<accession>Q9AJW0</accession>